<comment type="function">
    <text evidence="1">JanA and janB regulate somatic sex differentiation.</text>
</comment>
<comment type="similarity">
    <text evidence="2">Belongs to the janus family.</text>
</comment>
<keyword id="KW-0221">Differentiation</keyword>
<keyword id="KW-0726">Sexual differentiation</keyword>
<sequence>MKMFKSLSQLPRIVSPFQKCYSTDLISLVGIPRVKITKGQNRYLLVNIHTHGFTKYGRVIVRGADVDNHLTVFDSILEELEPQGICAKILGGGRILNEADSKKMKIYGTSRTFGSADHTRTRNILHSWTTYKDFKITVKN</sequence>
<proteinExistence type="inferred from homology"/>
<protein>
    <recommendedName>
        <fullName>Sex-regulated protein janus-B</fullName>
    </recommendedName>
</protein>
<evidence type="ECO:0000250" key="1"/>
<evidence type="ECO:0000305" key="2"/>
<evidence type="ECO:0000312" key="3">
    <source>
        <dbReference type="EMBL" id="AAG50369.1"/>
    </source>
</evidence>
<gene>
    <name type="primary">janB</name>
</gene>
<reference evidence="3" key="1">
    <citation type="journal article" date="2001" name="Mol. Biol. Evol.">
        <title>Molecular evolution of the ocnus and janus genes in the Drosophila melanogaster species subgroup.</title>
        <authorList>
            <person name="Parsch J."/>
            <person name="Meiklejohn C.D."/>
            <person name="Hauschteck-Jungen E."/>
            <person name="Hunziker P."/>
            <person name="Hartl D.L."/>
        </authorList>
    </citation>
    <scope>NUCLEOTIDE SEQUENCE [GENOMIC DNA]</scope>
</reference>
<feature type="chain" id="PRO_0000206172" description="Sex-regulated protein janus-B">
    <location>
        <begin position="1"/>
        <end position="140"/>
    </location>
</feature>
<feature type="active site" description="Proton acceptor" evidence="1">
    <location>
        <position position="69"/>
    </location>
</feature>
<feature type="binding site" evidence="1">
    <location>
        <position position="42"/>
    </location>
    <ligand>
        <name>substrate</name>
    </ligand>
</feature>
<feature type="binding site" evidence="1">
    <location>
        <begin position="110"/>
        <end position="112"/>
    </location>
    <ligand>
        <name>substrate</name>
    </ligand>
</feature>
<name>JANB_DROYA</name>
<organism evidence="3">
    <name type="scientific">Drosophila yakuba</name>
    <name type="common">Fruit fly</name>
    <dbReference type="NCBI Taxonomy" id="7245"/>
    <lineage>
        <taxon>Eukaryota</taxon>
        <taxon>Metazoa</taxon>
        <taxon>Ecdysozoa</taxon>
        <taxon>Arthropoda</taxon>
        <taxon>Hexapoda</taxon>
        <taxon>Insecta</taxon>
        <taxon>Pterygota</taxon>
        <taxon>Neoptera</taxon>
        <taxon>Endopterygota</taxon>
        <taxon>Diptera</taxon>
        <taxon>Brachycera</taxon>
        <taxon>Muscomorpha</taxon>
        <taxon>Ephydroidea</taxon>
        <taxon>Drosophilidae</taxon>
        <taxon>Drosophila</taxon>
        <taxon>Sophophora</taxon>
    </lineage>
</organism>
<dbReference type="EMBL" id="AY013348">
    <property type="protein sequence ID" value="AAG50369.1"/>
    <property type="molecule type" value="Genomic_DNA"/>
</dbReference>
<dbReference type="SMR" id="Q9BM92"/>
<dbReference type="OrthoDB" id="10249612at2759"/>
<dbReference type="GO" id="GO:0005829">
    <property type="term" value="C:cytosol"/>
    <property type="evidence" value="ECO:0007669"/>
    <property type="project" value="TreeGrafter"/>
</dbReference>
<dbReference type="GO" id="GO:0101006">
    <property type="term" value="F:protein histidine phosphatase activity"/>
    <property type="evidence" value="ECO:0007669"/>
    <property type="project" value="TreeGrafter"/>
</dbReference>
<dbReference type="GO" id="GO:0030154">
    <property type="term" value="P:cell differentiation"/>
    <property type="evidence" value="ECO:0007669"/>
    <property type="project" value="UniProtKB-KW"/>
</dbReference>
<dbReference type="GO" id="GO:0007548">
    <property type="term" value="P:sex differentiation"/>
    <property type="evidence" value="ECO:0000250"/>
    <property type="project" value="UniProtKB"/>
</dbReference>
<dbReference type="FunFam" id="3.50.20.20:FF:000002">
    <property type="entry name" value="Sex-regulated protein janus-B"/>
    <property type="match status" value="1"/>
</dbReference>
<dbReference type="Gene3D" id="3.50.20.20">
    <property type="entry name" value="Janus/Ocnus"/>
    <property type="match status" value="1"/>
</dbReference>
<dbReference type="InterPro" id="IPR007702">
    <property type="entry name" value="Janus"/>
</dbReference>
<dbReference type="InterPro" id="IPR038596">
    <property type="entry name" value="Janus_sf"/>
</dbReference>
<dbReference type="PANTHER" id="PTHR12258:SF5">
    <property type="entry name" value="BCDNA.GH02250-RELATED"/>
    <property type="match status" value="1"/>
</dbReference>
<dbReference type="PANTHER" id="PTHR12258">
    <property type="entry name" value="JANUS-A/JANUS-B"/>
    <property type="match status" value="1"/>
</dbReference>
<dbReference type="Pfam" id="PF05005">
    <property type="entry name" value="Ocnus"/>
    <property type="match status" value="1"/>
</dbReference>
<dbReference type="SUPFAM" id="SSF143724">
    <property type="entry name" value="PHP14-like"/>
    <property type="match status" value="1"/>
</dbReference>
<accession>Q9BM92</accession>